<keyword id="KW-0002">3D-structure</keyword>
<keyword id="KW-0025">Alternative splicing</keyword>
<keyword id="KW-0037">Angiogenesis</keyword>
<keyword id="KW-0130">Cell adhesion</keyword>
<keyword id="KW-0968">Cytoplasmic vesicle</keyword>
<keyword id="KW-0903">Direct protein sequencing</keyword>
<keyword id="KW-1015">Disulfide bond</keyword>
<keyword id="KW-0245">EGF-like domain</keyword>
<keyword id="KW-0278">Fertilization</keyword>
<keyword id="KW-0325">Glycoprotein</keyword>
<keyword id="KW-0472">Membrane</keyword>
<keyword id="KW-1185">Reference proteome</keyword>
<keyword id="KW-0677">Repeat</keyword>
<keyword id="KW-0964">Secreted</keyword>
<keyword id="KW-0732">Signal</keyword>
<feature type="signal peptide" evidence="8">
    <location>
        <begin position="1"/>
        <end position="22"/>
    </location>
</feature>
<feature type="chain" id="PRO_0000007653" description="Lactadherin">
    <location>
        <begin position="23"/>
        <end position="463"/>
    </location>
</feature>
<feature type="domain" description="EGF-like 1" evidence="4">
    <location>
        <begin position="24"/>
        <end position="61"/>
    </location>
</feature>
<feature type="domain" description="EGF-like 2" evidence="4">
    <location>
        <begin position="64"/>
        <end position="108"/>
    </location>
</feature>
<feature type="domain" description="F5/8 type C 1" evidence="5">
    <location>
        <begin position="148"/>
        <end position="303"/>
    </location>
</feature>
<feature type="domain" description="F5/8 type C 2" evidence="5">
    <location>
        <begin position="308"/>
        <end position="463"/>
    </location>
</feature>
<feature type="short sequence motif" description="Cell attachment site">
    <location>
        <begin position="87"/>
        <end position="89"/>
    </location>
</feature>
<feature type="glycosylation site" description="N-linked (GlcNAc...) asparagine" evidence="3">
    <location>
        <position position="61"/>
    </location>
</feature>
<feature type="glycosylation site" description="N-linked (GlcNAc...) asparagine" evidence="3">
    <location>
        <position position="266"/>
    </location>
</feature>
<feature type="glycosylation site" description="N-linked (GlcNAc...) asparagine" evidence="3">
    <location>
        <position position="316"/>
    </location>
</feature>
<feature type="glycosylation site" description="N-linked (GlcNAc...) asparagine" evidence="3">
    <location>
        <position position="426"/>
    </location>
</feature>
<feature type="disulfide bond" evidence="1">
    <location>
        <begin position="28"/>
        <end position="39"/>
    </location>
</feature>
<feature type="disulfide bond" evidence="1">
    <location>
        <begin position="33"/>
        <end position="49"/>
    </location>
</feature>
<feature type="disulfide bond" evidence="1">
    <location>
        <begin position="51"/>
        <end position="60"/>
    </location>
</feature>
<feature type="disulfide bond" evidence="1">
    <location>
        <begin position="68"/>
        <end position="79"/>
    </location>
</feature>
<feature type="disulfide bond" evidence="1">
    <location>
        <begin position="73"/>
        <end position="96"/>
    </location>
</feature>
<feature type="disulfide bond" evidence="1">
    <location>
        <begin position="98"/>
        <end position="107"/>
    </location>
</feature>
<feature type="disulfide bond" evidence="1">
    <location>
        <begin position="148"/>
        <end position="303"/>
    </location>
</feature>
<feature type="disulfide bond" evidence="1">
    <location>
        <begin position="290"/>
        <end position="294"/>
    </location>
</feature>
<feature type="disulfide bond" evidence="9">
    <location>
        <begin position="308"/>
        <end position="463"/>
    </location>
</feature>
<feature type="splice variant" id="VSP_009880" description="In isoform 2." evidence="11 12 13 14 15">
    <original>ETNYYNLDGEYMFTTAVPNTAVPTPAPTPDLSNNLASR</original>
    <variation>G</variation>
    <location>
        <begin position="110"/>
        <end position="147"/>
    </location>
</feature>
<feature type="sequence conflict" description="In Ref. 1; AA sequence." evidence="16" ref="1">
    <original>N</original>
    <variation>D</variation>
    <location>
        <position position="35"/>
    </location>
</feature>
<feature type="sequence conflict" description="In Ref. 1; AAA39534." evidence="16" ref="1">
    <original>S</original>
    <variation>Y</variation>
    <location>
        <position position="168"/>
    </location>
</feature>
<feature type="sequence conflict" description="In Ref. 1; AAA39534." evidence="16" ref="1">
    <original>T</original>
    <variation>H</variation>
    <location>
        <position position="196"/>
    </location>
</feature>
<feature type="sequence conflict" description="In Ref. 1; AAA39534, 3; CAA72380, 4; BAA35180/BAA76386, 5; BAC40794/BAE42274 and 6; AAH03892/AAH03904." evidence="16" ref="1 3 4 5 6">
    <original>K</original>
    <variation>R</variation>
    <location>
        <position position="284"/>
    </location>
</feature>
<feature type="sequence conflict" description="In Ref. 1; AAA39534." evidence="16" ref="1">
    <original>S</original>
    <variation>L</variation>
    <location>
        <position position="309"/>
    </location>
</feature>
<feature type="sequence conflict" description="In Ref. 1; AAA39534." evidence="16" ref="1">
    <original>A</original>
    <variation>E</variation>
    <location>
        <position position="395"/>
    </location>
</feature>
<feature type="strand" evidence="17">
    <location>
        <begin position="312"/>
        <end position="316"/>
    </location>
</feature>
<feature type="strand" evidence="17">
    <location>
        <begin position="323"/>
        <end position="327"/>
    </location>
</feature>
<feature type="strand" evidence="17">
    <location>
        <begin position="346"/>
        <end position="348"/>
    </location>
</feature>
<feature type="strand" evidence="17">
    <location>
        <begin position="350"/>
        <end position="352"/>
    </location>
</feature>
<feature type="strand" evidence="17">
    <location>
        <begin position="355"/>
        <end position="357"/>
    </location>
</feature>
<feature type="strand" evidence="17">
    <location>
        <begin position="359"/>
        <end position="362"/>
    </location>
</feature>
<feature type="strand" evidence="17">
    <location>
        <begin position="367"/>
        <end position="384"/>
    </location>
</feature>
<feature type="strand" evidence="17">
    <location>
        <begin position="393"/>
        <end position="406"/>
    </location>
</feature>
<feature type="strand" evidence="17">
    <location>
        <begin position="414"/>
        <end position="416"/>
    </location>
</feature>
<feature type="turn" evidence="17">
    <location>
        <begin position="425"/>
        <end position="427"/>
    </location>
</feature>
<feature type="strand" evidence="17">
    <location>
        <begin position="430"/>
        <end position="432"/>
    </location>
</feature>
<feature type="strand" evidence="17">
    <location>
        <begin position="434"/>
        <end position="436"/>
    </location>
</feature>
<feature type="strand" evidence="17">
    <location>
        <begin position="438"/>
        <end position="453"/>
    </location>
</feature>
<feature type="strand" evidence="17">
    <location>
        <begin position="455"/>
        <end position="462"/>
    </location>
</feature>
<dbReference type="EMBL" id="M38337">
    <property type="protein sequence ID" value="AAA39534.1"/>
    <property type="molecule type" value="mRNA"/>
</dbReference>
<dbReference type="EMBL" id="Y11684">
    <property type="protein sequence ID" value="CAA72380.2"/>
    <property type="molecule type" value="mRNA"/>
</dbReference>
<dbReference type="EMBL" id="AB021130">
    <property type="protein sequence ID" value="BAA35180.1"/>
    <property type="molecule type" value="mRNA"/>
</dbReference>
<dbReference type="EMBL" id="AB025280">
    <property type="protein sequence ID" value="BAA76386.1"/>
    <property type="molecule type" value="mRNA"/>
</dbReference>
<dbReference type="EMBL" id="AK089211">
    <property type="protein sequence ID" value="BAC40794.1"/>
    <property type="molecule type" value="mRNA"/>
</dbReference>
<dbReference type="EMBL" id="AK152088">
    <property type="protein sequence ID" value="BAE30938.1"/>
    <property type="molecule type" value="mRNA"/>
</dbReference>
<dbReference type="EMBL" id="AK171143">
    <property type="protein sequence ID" value="BAE42274.1"/>
    <property type="molecule type" value="mRNA"/>
</dbReference>
<dbReference type="EMBL" id="BC003892">
    <property type="protein sequence ID" value="AAH03892.1"/>
    <property type="molecule type" value="mRNA"/>
</dbReference>
<dbReference type="EMBL" id="BC003904">
    <property type="protein sequence ID" value="AAH03904.1"/>
    <property type="molecule type" value="mRNA"/>
</dbReference>
<dbReference type="CCDS" id="CCDS21379.1">
    <molecule id="P21956-1"/>
</dbReference>
<dbReference type="CCDS" id="CCDS39989.1">
    <molecule id="P21956-2"/>
</dbReference>
<dbReference type="PIR" id="A36479">
    <property type="entry name" value="A36479"/>
</dbReference>
<dbReference type="RefSeq" id="NP_001038954.1">
    <molecule id="P21956-2"/>
    <property type="nucleotide sequence ID" value="NM_001045489.1"/>
</dbReference>
<dbReference type="RefSeq" id="NP_032620.2">
    <molecule id="P21956-1"/>
    <property type="nucleotide sequence ID" value="NM_008594.2"/>
</dbReference>
<dbReference type="PDB" id="2L9L">
    <property type="method" value="NMR"/>
    <property type="chains" value="A=306-463"/>
</dbReference>
<dbReference type="PDBsum" id="2L9L"/>
<dbReference type="SMR" id="P21956"/>
<dbReference type="BioGRID" id="201407">
    <property type="interactions" value="1"/>
</dbReference>
<dbReference type="FunCoup" id="P21956">
    <property type="interactions" value="156"/>
</dbReference>
<dbReference type="STRING" id="10090.ENSMUSP00000032825"/>
<dbReference type="GlyConnect" id="2453">
    <property type="glycosylation" value="2 N-Linked glycans (2 sites)"/>
</dbReference>
<dbReference type="GlyCosmos" id="P21956">
    <property type="glycosylation" value="4 sites, 2 glycans"/>
</dbReference>
<dbReference type="GlyGen" id="P21956">
    <property type="glycosylation" value="7 sites, 3 N-linked glycans (2 sites), 1 O-linked glycan (1 site)"/>
</dbReference>
<dbReference type="iPTMnet" id="P21956"/>
<dbReference type="PhosphoSitePlus" id="P21956"/>
<dbReference type="CPTAC" id="non-CPTAC-3990"/>
<dbReference type="jPOST" id="P21956"/>
<dbReference type="PaxDb" id="10090-ENSMUSP00000032825"/>
<dbReference type="PeptideAtlas" id="P21956"/>
<dbReference type="ProteomicsDB" id="252547">
    <molecule id="P21956-1"/>
</dbReference>
<dbReference type="ProteomicsDB" id="252548">
    <molecule id="P21956-2"/>
</dbReference>
<dbReference type="Pumba" id="P21956"/>
<dbReference type="Antibodypedia" id="651">
    <property type="antibodies" value="720 antibodies from 36 providers"/>
</dbReference>
<dbReference type="DNASU" id="17304"/>
<dbReference type="Ensembl" id="ENSMUST00000032825.14">
    <molecule id="P21956-1"/>
    <property type="protein sequence ID" value="ENSMUSP00000032825.9"/>
    <property type="gene ID" value="ENSMUSG00000030605.16"/>
</dbReference>
<dbReference type="Ensembl" id="ENSMUST00000107409.5">
    <molecule id="P21956-2"/>
    <property type="protein sequence ID" value="ENSMUSP00000103032.4"/>
    <property type="gene ID" value="ENSMUSG00000030605.16"/>
</dbReference>
<dbReference type="GeneID" id="17304"/>
<dbReference type="KEGG" id="mmu:17304"/>
<dbReference type="UCSC" id="uc009hxz.1">
    <molecule id="P21956-1"/>
    <property type="organism name" value="mouse"/>
</dbReference>
<dbReference type="UCSC" id="uc009hyb.1">
    <molecule id="P21956-2"/>
    <property type="organism name" value="mouse"/>
</dbReference>
<dbReference type="AGR" id="MGI:102768"/>
<dbReference type="CTD" id="4240"/>
<dbReference type="MGI" id="MGI:102768">
    <property type="gene designation" value="Mfge8"/>
</dbReference>
<dbReference type="VEuPathDB" id="HostDB:ENSMUSG00000030605"/>
<dbReference type="eggNOG" id="ENOG502QVK3">
    <property type="taxonomic scope" value="Eukaryota"/>
</dbReference>
<dbReference type="GeneTree" id="ENSGT00940000156049"/>
<dbReference type="HOGENOM" id="CLU_030066_0_1_1"/>
<dbReference type="InParanoid" id="P21956"/>
<dbReference type="OMA" id="NPCYHNA"/>
<dbReference type="OrthoDB" id="2121828at2759"/>
<dbReference type="PhylomeDB" id="P21956"/>
<dbReference type="TreeFam" id="TF330156"/>
<dbReference type="Reactome" id="R-MMU-381426">
    <property type="pathway name" value="Regulation of Insulin-like Growth Factor (IGF) transport and uptake by Insulin-like Growth Factor Binding Proteins (IGFBPs)"/>
</dbReference>
<dbReference type="Reactome" id="R-MMU-8957275">
    <property type="pathway name" value="Post-translational protein phosphorylation"/>
</dbReference>
<dbReference type="BioGRID-ORCS" id="17304">
    <property type="hits" value="0 hits in 82 CRISPR screens"/>
</dbReference>
<dbReference type="ChiTaRS" id="Mfge8">
    <property type="organism name" value="mouse"/>
</dbReference>
<dbReference type="EvolutionaryTrace" id="P21956"/>
<dbReference type="PRO" id="PR:P21956"/>
<dbReference type="Proteomes" id="UP000000589">
    <property type="component" value="Chromosome 7"/>
</dbReference>
<dbReference type="RNAct" id="P21956">
    <property type="molecule type" value="protein"/>
</dbReference>
<dbReference type="Bgee" id="ENSMUSG00000030605">
    <property type="expression patterns" value="Expressed in thoracic mammary gland and 278 other cell types or tissues"/>
</dbReference>
<dbReference type="ExpressionAtlas" id="P21956">
    <property type="expression patterns" value="baseline and differential"/>
</dbReference>
<dbReference type="GO" id="GO:0002080">
    <property type="term" value="C:acrosomal membrane"/>
    <property type="evidence" value="ECO:0007669"/>
    <property type="project" value="UniProtKB-SubCell"/>
</dbReference>
<dbReference type="GO" id="GO:0062023">
    <property type="term" value="C:collagen-containing extracellular matrix"/>
    <property type="evidence" value="ECO:0007005"/>
    <property type="project" value="BHF-UCL"/>
</dbReference>
<dbReference type="GO" id="GO:0009897">
    <property type="term" value="C:external side of plasma membrane"/>
    <property type="evidence" value="ECO:0000314"/>
    <property type="project" value="MGI"/>
</dbReference>
<dbReference type="GO" id="GO:0005615">
    <property type="term" value="C:extracellular space"/>
    <property type="evidence" value="ECO:0000314"/>
    <property type="project" value="MGI"/>
</dbReference>
<dbReference type="GO" id="GO:0005178">
    <property type="term" value="F:integrin binding"/>
    <property type="evidence" value="ECO:0000314"/>
    <property type="project" value="BHF-UCL"/>
</dbReference>
<dbReference type="GO" id="GO:0008429">
    <property type="term" value="F:phosphatidylethanolamine binding"/>
    <property type="evidence" value="ECO:0000314"/>
    <property type="project" value="MGI"/>
</dbReference>
<dbReference type="GO" id="GO:0001786">
    <property type="term" value="F:phosphatidylserine binding"/>
    <property type="evidence" value="ECO:0000314"/>
    <property type="project" value="MGI"/>
</dbReference>
<dbReference type="GO" id="GO:0001525">
    <property type="term" value="P:angiogenesis"/>
    <property type="evidence" value="ECO:0007669"/>
    <property type="project" value="UniProtKB-KW"/>
</dbReference>
<dbReference type="GO" id="GO:0043277">
    <property type="term" value="P:apoptotic cell clearance"/>
    <property type="evidence" value="ECO:0000314"/>
    <property type="project" value="BHF-UCL"/>
</dbReference>
<dbReference type="GO" id="GO:0007155">
    <property type="term" value="P:cell adhesion"/>
    <property type="evidence" value="ECO:0007669"/>
    <property type="project" value="UniProtKB-KW"/>
</dbReference>
<dbReference type="GO" id="GO:0006911">
    <property type="term" value="P:phagocytosis, engulfment"/>
    <property type="evidence" value="ECO:0000314"/>
    <property type="project" value="MGI"/>
</dbReference>
<dbReference type="GO" id="GO:0006910">
    <property type="term" value="P:phagocytosis, recognition"/>
    <property type="evidence" value="ECO:0000314"/>
    <property type="project" value="MGI"/>
</dbReference>
<dbReference type="GO" id="GO:0050766">
    <property type="term" value="P:positive regulation of phagocytosis"/>
    <property type="evidence" value="ECO:0000314"/>
    <property type="project" value="MGI"/>
</dbReference>
<dbReference type="GO" id="GO:0007338">
    <property type="term" value="P:single fertilization"/>
    <property type="evidence" value="ECO:0007669"/>
    <property type="project" value="UniProtKB-KW"/>
</dbReference>
<dbReference type="CDD" id="cd00054">
    <property type="entry name" value="EGF_CA"/>
    <property type="match status" value="2"/>
</dbReference>
<dbReference type="CDD" id="cd00057">
    <property type="entry name" value="FA58C"/>
    <property type="match status" value="2"/>
</dbReference>
<dbReference type="FunFam" id="2.60.120.260:FF:000002">
    <property type="entry name" value="Coagulation factor VIII"/>
    <property type="match status" value="2"/>
</dbReference>
<dbReference type="FunFam" id="2.10.25.10:FF:000767">
    <property type="entry name" value="Vasorin a"/>
    <property type="match status" value="1"/>
</dbReference>
<dbReference type="Gene3D" id="2.60.120.260">
    <property type="entry name" value="Galactose-binding domain-like"/>
    <property type="match status" value="2"/>
</dbReference>
<dbReference type="Gene3D" id="2.10.25.10">
    <property type="entry name" value="Laminin"/>
    <property type="match status" value="2"/>
</dbReference>
<dbReference type="InterPro" id="IPR000742">
    <property type="entry name" value="EGF-like_dom"/>
</dbReference>
<dbReference type="InterPro" id="IPR000421">
    <property type="entry name" value="FA58C"/>
</dbReference>
<dbReference type="InterPro" id="IPR008979">
    <property type="entry name" value="Galactose-bd-like_sf"/>
</dbReference>
<dbReference type="InterPro" id="IPR050633">
    <property type="entry name" value="Neuropilin_MCO_CoagFactor"/>
</dbReference>
<dbReference type="PANTHER" id="PTHR46806">
    <property type="entry name" value="F5/8 TYPE C DOMAIN-CONTAINING PROTEIN"/>
    <property type="match status" value="1"/>
</dbReference>
<dbReference type="PANTHER" id="PTHR46806:SF11">
    <property type="entry name" value="MILK FAT GLOBULE EGF AND FACTOR V_VIII DOMAIN CONTAINING"/>
    <property type="match status" value="1"/>
</dbReference>
<dbReference type="Pfam" id="PF00008">
    <property type="entry name" value="EGF"/>
    <property type="match status" value="2"/>
</dbReference>
<dbReference type="Pfam" id="PF00754">
    <property type="entry name" value="F5_F8_type_C"/>
    <property type="match status" value="2"/>
</dbReference>
<dbReference type="SMART" id="SM00181">
    <property type="entry name" value="EGF"/>
    <property type="match status" value="2"/>
</dbReference>
<dbReference type="SMART" id="SM00231">
    <property type="entry name" value="FA58C"/>
    <property type="match status" value="2"/>
</dbReference>
<dbReference type="SUPFAM" id="SSF57196">
    <property type="entry name" value="EGF/Laminin"/>
    <property type="match status" value="2"/>
</dbReference>
<dbReference type="SUPFAM" id="SSF49785">
    <property type="entry name" value="Galactose-binding domain-like"/>
    <property type="match status" value="2"/>
</dbReference>
<dbReference type="PROSITE" id="PS00022">
    <property type="entry name" value="EGF_1"/>
    <property type="match status" value="2"/>
</dbReference>
<dbReference type="PROSITE" id="PS01186">
    <property type="entry name" value="EGF_2"/>
    <property type="match status" value="2"/>
</dbReference>
<dbReference type="PROSITE" id="PS50026">
    <property type="entry name" value="EGF_3"/>
    <property type="match status" value="2"/>
</dbReference>
<dbReference type="PROSITE" id="PS01285">
    <property type="entry name" value="FA58C_1"/>
    <property type="match status" value="2"/>
</dbReference>
<dbReference type="PROSITE" id="PS01286">
    <property type="entry name" value="FA58C_2"/>
    <property type="match status" value="2"/>
</dbReference>
<dbReference type="PROSITE" id="PS50022">
    <property type="entry name" value="FA58C_3"/>
    <property type="match status" value="2"/>
</dbReference>
<proteinExistence type="evidence at protein level"/>
<evidence type="ECO:0000250" key="1"/>
<evidence type="ECO:0000250" key="2">
    <source>
        <dbReference type="UniProtKB" id="P79385"/>
    </source>
</evidence>
<evidence type="ECO:0000255" key="3"/>
<evidence type="ECO:0000255" key="4">
    <source>
        <dbReference type="PROSITE-ProRule" id="PRU00076"/>
    </source>
</evidence>
<evidence type="ECO:0000255" key="5">
    <source>
        <dbReference type="PROSITE-ProRule" id="PRU00081"/>
    </source>
</evidence>
<evidence type="ECO:0000269" key="6">
    <source>
    </source>
</evidence>
<evidence type="ECO:0000269" key="7">
    <source>
    </source>
</evidence>
<evidence type="ECO:0000269" key="8">
    <source>
    </source>
</evidence>
<evidence type="ECO:0000269" key="9">
    <source>
    </source>
</evidence>
<evidence type="ECO:0000269" key="10">
    <source>
    </source>
</evidence>
<evidence type="ECO:0000303" key="11">
    <source>
    </source>
</evidence>
<evidence type="ECO:0000303" key="12">
    <source>
    </source>
</evidence>
<evidence type="ECO:0000303" key="13">
    <source>
    </source>
</evidence>
<evidence type="ECO:0000303" key="14">
    <source>
    </source>
</evidence>
<evidence type="ECO:0000303" key="15">
    <source ref="2"/>
</evidence>
<evidence type="ECO:0000305" key="16"/>
<evidence type="ECO:0007829" key="17">
    <source>
        <dbReference type="PDB" id="2L9L"/>
    </source>
</evidence>
<protein>
    <recommendedName>
        <fullName>Lactadherin</fullName>
    </recommendedName>
    <alternativeName>
        <fullName>MFGM</fullName>
    </alternativeName>
    <alternativeName>
        <fullName>Milk fat globule-EGF factor 8</fullName>
        <shortName>MFG-E8</shortName>
    </alternativeName>
    <alternativeName>
        <fullName>SED1</fullName>
    </alternativeName>
    <alternativeName>
        <fullName>Sperm surface protein SP47</fullName>
        <shortName>MP47</shortName>
    </alternativeName>
</protein>
<name>MFGM_MOUSE</name>
<comment type="function">
    <text evidence="1 6 7">Contributes to phagocytic removal of apoptotic cells in many tissues. Specific ligand for the alpha-v/beta-3 and alpha-v/beta-5 receptors. Also binds to phosphatidylserine-enriched cell surfaces in a receptor-independent manner. Zona pellucida-binding protein which may play a role in gamete interaction (By similarity). Plays an important role in the maintenance of intestinal epithelial homeostasis and the promotion of mucosal healing. Promotes VEGF-dependent neovascularization.</text>
</comment>
<comment type="subcellular location">
    <subcellularLocation>
        <location evidence="8">Membrane</location>
        <topology evidence="8">Peripheral membrane protein</topology>
    </subcellularLocation>
    <subcellularLocation>
        <location evidence="8">Secreted</location>
    </subcellularLocation>
    <subcellularLocation>
        <location evidence="2">Cytoplasmic vesicle</location>
        <location evidence="2">Secretory vesicle</location>
        <location evidence="2">Acrosome membrane</location>
        <topology evidence="2">Peripheral membrane protein</topology>
    </subcellularLocation>
    <text evidence="2">Located in the acrosomal region of zona-pellucida bound sperm.</text>
</comment>
<comment type="alternative products">
    <event type="alternative splicing"/>
    <isoform>
        <id>P21956-1</id>
        <name>1</name>
        <name>Long</name>
        <sequence type="displayed"/>
    </isoform>
    <isoform>
        <id>P21956-2</id>
        <name>2</name>
        <name>Short</name>
        <sequence type="described" ref="VSP_009880"/>
    </isoform>
</comment>
<comment type="tissue specificity">
    <text evidence="8 10">Mammary epithelial cell surfaces and spermatozoan. Isoform 2 is present in brain, heart, kidney and spleen and at low levels in lung, liver, small intestine and testis.</text>
</comment>
<comment type="developmental stage">
    <text evidence="8 10">Isoform 1 and isoform 2 are detectable in mammary tissue from non-pregnant animals, with isoform 2 being predominant. Levels of isoform 1 increase during gestation and lactation while levels of isoform 2 decrease.</text>
</comment>
<comment type="induction">
    <text evidence="10">Isoform 1 is induced by insulin, prolactin and hydrocortisone in mammary epithelial cells. Expression of isoform 2 is repressed by the same treatment.</text>
</comment>
<comment type="domain">
    <text>The F5/8 type C 2 domain mediates high-affinity binding to phosphatidylserine-containing membranes.</text>
</comment>
<comment type="PTM">
    <text evidence="10">N-glycosylated. Isoform 1 also exists in both an O-glycosylated and a non-O-glycosylated form.</text>
</comment>
<organism>
    <name type="scientific">Mus musculus</name>
    <name type="common">Mouse</name>
    <dbReference type="NCBI Taxonomy" id="10090"/>
    <lineage>
        <taxon>Eukaryota</taxon>
        <taxon>Metazoa</taxon>
        <taxon>Chordata</taxon>
        <taxon>Craniata</taxon>
        <taxon>Vertebrata</taxon>
        <taxon>Euteleostomi</taxon>
        <taxon>Mammalia</taxon>
        <taxon>Eutheria</taxon>
        <taxon>Euarchontoglires</taxon>
        <taxon>Glires</taxon>
        <taxon>Rodentia</taxon>
        <taxon>Myomorpha</taxon>
        <taxon>Muroidea</taxon>
        <taxon>Muridae</taxon>
        <taxon>Murinae</taxon>
        <taxon>Mus</taxon>
        <taxon>Mus</taxon>
    </lineage>
</organism>
<sequence length="463" mass="51241">MQVSRVLAALCGMLLCASGLFAASGDFCDSSLCLNGGTCLTGQDNDIYCLCPEGFTGLVCNETERGPCSPNPCYNDAKCLVTLDTQRGDIFTEYICQCPVGYSGIHCETETNYYNLDGEYMFTTAVPNTAVPTPAPTPDLSNNLASRCSTQLGMEGGAIADSQISASSVYMGFMGLQRWGPELARLYRTGIVNAWTASNYDSKPWIQVNLLRKMRVSGVMTQGASRAGRAEYLKTFKVAYSLDGRKFEFIQDESGGDKEFLGNLDNNSLKVNMFNPTLEAQYIKLYPVSCHRGCTLRFELLGCELHGCSEPLGLKNNTIPDSQMSASSSYKTWNLRAFGWYPHLGRLDNQGKINAWTAQSNSAKEWLQVDLGTQRQVTGIITQGARDFGHIQYVASYKVAHSDDGVQWTVYEEQGSSKVFQGNLDNNSHKKNIFEKPFMARYVRVLPVSWHNRITLRLELLGC</sequence>
<gene>
    <name type="primary">Mfge8</name>
</gene>
<accession>P21956</accession>
<accession>P97800</accession>
<accession>Q3TBN5</accession>
<accession>Q3U8S9</accession>
<accession>Q9R1X9</accession>
<accession>Q9WTS3</accession>
<reference key="1">
    <citation type="journal article" date="1990" name="Proc. Natl. Acad. Sci. U.S.A.">
        <title>cDNA cloning of a mouse mammary epithelial cell surface protein reveals the existence of epidermal growth factor-like domains linked to factor VIII-like sequences.</title>
        <authorList>
            <person name="Stubbs J.D."/>
            <person name="Lekutis C."/>
            <person name="Singer K.L."/>
            <person name="Bui A."/>
            <person name="Yuzuki D."/>
            <person name="Srinivasan U."/>
            <person name="Parry G."/>
        </authorList>
    </citation>
    <scope>NUCLEOTIDE SEQUENCE [MRNA] (ISOFORM 1)</scope>
    <scope>PROTEIN SEQUENCE OF 23-35</scope>
    <scope>TISSUE SPECIFICITY</scope>
    <scope>SUBCELLULAR LOCATION</scope>
    <scope>DEVELOPMENTAL STAGE</scope>
    <source>
        <strain>BALB/cJ</strain>
        <tissue>Mammary gland</tissue>
    </source>
</reference>
<reference key="2">
    <citation type="submission" date="2003-01" db="EMBL/GenBank/DDBJ databases">
        <authorList>
            <person name="Ensslin M.A."/>
        </authorList>
    </citation>
    <scope>NUCLEOTIDE SEQUENCE [MRNA] (ISOFORM 2)</scope>
</reference>
<reference key="3">
    <citation type="journal article" date="1998" name="Biol. Reprod.">
        <title>Molecular cloning and characterization of P47, a novel boar sperm-associated zona pellucida-binding protein homologous to a family of mammalian secretory proteins.</title>
        <authorList>
            <person name="Ensslin M.A."/>
            <person name="Vogel T."/>
            <person name="Calvete J.J."/>
            <person name="Thole H.H."/>
            <person name="Schmidtke J."/>
            <person name="Matsuda T."/>
            <person name="Toepfer-Petersen E."/>
        </authorList>
    </citation>
    <scope>NUCLEOTIDE SEQUENCE [MRNA] OF 23-463 (ISOFORM 2)</scope>
    <source>
        <tissue>Testis</tissue>
    </source>
</reference>
<reference key="4">
    <citation type="journal article" date="1999" name="Biochem. Biophys. Res. Commun.">
        <title>Lactation-dependent expression of an mRNA splice variant with an exon for a multiply O-glycosylated domain of mouse milk fat globule glycoprotein MFG-E8.</title>
        <authorList>
            <person name="Oshima K."/>
            <person name="Aoki N."/>
            <person name="Negi M."/>
            <person name="Kishi M."/>
            <person name="Kitajima K."/>
            <person name="Matsuda T."/>
        </authorList>
    </citation>
    <scope>NUCLEOTIDE SEQUENCE [MRNA] (ISOFORMS 1 AND 2)</scope>
    <scope>TISSUE SPECIFICITY</scope>
    <scope>DEVELOPMENTAL STAGE</scope>
    <scope>INDUCTION</scope>
    <scope>GLYCOSYLATION</scope>
    <source>
        <strain>BALB/cJ</strain>
        <tissue>Mammary gland</tissue>
    </source>
</reference>
<reference key="5">
    <citation type="journal article" date="2005" name="Science">
        <title>The transcriptional landscape of the mammalian genome.</title>
        <authorList>
            <person name="Carninci P."/>
            <person name="Kasukawa T."/>
            <person name="Katayama S."/>
            <person name="Gough J."/>
            <person name="Frith M.C."/>
            <person name="Maeda N."/>
            <person name="Oyama R."/>
            <person name="Ravasi T."/>
            <person name="Lenhard B."/>
            <person name="Wells C."/>
            <person name="Kodzius R."/>
            <person name="Shimokawa K."/>
            <person name="Bajic V.B."/>
            <person name="Brenner S.E."/>
            <person name="Batalov S."/>
            <person name="Forrest A.R."/>
            <person name="Zavolan M."/>
            <person name="Davis M.J."/>
            <person name="Wilming L.G."/>
            <person name="Aidinis V."/>
            <person name="Allen J.E."/>
            <person name="Ambesi-Impiombato A."/>
            <person name="Apweiler R."/>
            <person name="Aturaliya R.N."/>
            <person name="Bailey T.L."/>
            <person name="Bansal M."/>
            <person name="Baxter L."/>
            <person name="Beisel K.W."/>
            <person name="Bersano T."/>
            <person name="Bono H."/>
            <person name="Chalk A.M."/>
            <person name="Chiu K.P."/>
            <person name="Choudhary V."/>
            <person name="Christoffels A."/>
            <person name="Clutterbuck D.R."/>
            <person name="Crowe M.L."/>
            <person name="Dalla E."/>
            <person name="Dalrymple B.P."/>
            <person name="de Bono B."/>
            <person name="Della Gatta G."/>
            <person name="di Bernardo D."/>
            <person name="Down T."/>
            <person name="Engstrom P."/>
            <person name="Fagiolini M."/>
            <person name="Faulkner G."/>
            <person name="Fletcher C.F."/>
            <person name="Fukushima T."/>
            <person name="Furuno M."/>
            <person name="Futaki S."/>
            <person name="Gariboldi M."/>
            <person name="Georgii-Hemming P."/>
            <person name="Gingeras T.R."/>
            <person name="Gojobori T."/>
            <person name="Green R.E."/>
            <person name="Gustincich S."/>
            <person name="Harbers M."/>
            <person name="Hayashi Y."/>
            <person name="Hensch T.K."/>
            <person name="Hirokawa N."/>
            <person name="Hill D."/>
            <person name="Huminiecki L."/>
            <person name="Iacono M."/>
            <person name="Ikeo K."/>
            <person name="Iwama A."/>
            <person name="Ishikawa T."/>
            <person name="Jakt M."/>
            <person name="Kanapin A."/>
            <person name="Katoh M."/>
            <person name="Kawasawa Y."/>
            <person name="Kelso J."/>
            <person name="Kitamura H."/>
            <person name="Kitano H."/>
            <person name="Kollias G."/>
            <person name="Krishnan S.P."/>
            <person name="Kruger A."/>
            <person name="Kummerfeld S.K."/>
            <person name="Kurochkin I.V."/>
            <person name="Lareau L.F."/>
            <person name="Lazarevic D."/>
            <person name="Lipovich L."/>
            <person name="Liu J."/>
            <person name="Liuni S."/>
            <person name="McWilliam S."/>
            <person name="Madan Babu M."/>
            <person name="Madera M."/>
            <person name="Marchionni L."/>
            <person name="Matsuda H."/>
            <person name="Matsuzawa S."/>
            <person name="Miki H."/>
            <person name="Mignone F."/>
            <person name="Miyake S."/>
            <person name="Morris K."/>
            <person name="Mottagui-Tabar S."/>
            <person name="Mulder N."/>
            <person name="Nakano N."/>
            <person name="Nakauchi H."/>
            <person name="Ng P."/>
            <person name="Nilsson R."/>
            <person name="Nishiguchi S."/>
            <person name="Nishikawa S."/>
            <person name="Nori F."/>
            <person name="Ohara O."/>
            <person name="Okazaki Y."/>
            <person name="Orlando V."/>
            <person name="Pang K.C."/>
            <person name="Pavan W.J."/>
            <person name="Pavesi G."/>
            <person name="Pesole G."/>
            <person name="Petrovsky N."/>
            <person name="Piazza S."/>
            <person name="Reed J."/>
            <person name="Reid J.F."/>
            <person name="Ring B.Z."/>
            <person name="Ringwald M."/>
            <person name="Rost B."/>
            <person name="Ruan Y."/>
            <person name="Salzberg S.L."/>
            <person name="Sandelin A."/>
            <person name="Schneider C."/>
            <person name="Schoenbach C."/>
            <person name="Sekiguchi K."/>
            <person name="Semple C.A."/>
            <person name="Seno S."/>
            <person name="Sessa L."/>
            <person name="Sheng Y."/>
            <person name="Shibata Y."/>
            <person name="Shimada H."/>
            <person name="Shimada K."/>
            <person name="Silva D."/>
            <person name="Sinclair B."/>
            <person name="Sperling S."/>
            <person name="Stupka E."/>
            <person name="Sugiura K."/>
            <person name="Sultana R."/>
            <person name="Takenaka Y."/>
            <person name="Taki K."/>
            <person name="Tammoja K."/>
            <person name="Tan S.L."/>
            <person name="Tang S."/>
            <person name="Taylor M.S."/>
            <person name="Tegner J."/>
            <person name="Teichmann S.A."/>
            <person name="Ueda H.R."/>
            <person name="van Nimwegen E."/>
            <person name="Verardo R."/>
            <person name="Wei C.L."/>
            <person name="Yagi K."/>
            <person name="Yamanishi H."/>
            <person name="Zabarovsky E."/>
            <person name="Zhu S."/>
            <person name="Zimmer A."/>
            <person name="Hide W."/>
            <person name="Bult C."/>
            <person name="Grimmond S.M."/>
            <person name="Teasdale R.D."/>
            <person name="Liu E.T."/>
            <person name="Brusic V."/>
            <person name="Quackenbush J."/>
            <person name="Wahlestedt C."/>
            <person name="Mattick J.S."/>
            <person name="Hume D.A."/>
            <person name="Kai C."/>
            <person name="Sasaki D."/>
            <person name="Tomaru Y."/>
            <person name="Fukuda S."/>
            <person name="Kanamori-Katayama M."/>
            <person name="Suzuki M."/>
            <person name="Aoki J."/>
            <person name="Arakawa T."/>
            <person name="Iida J."/>
            <person name="Imamura K."/>
            <person name="Itoh M."/>
            <person name="Kato T."/>
            <person name="Kawaji H."/>
            <person name="Kawagashira N."/>
            <person name="Kawashima T."/>
            <person name="Kojima M."/>
            <person name="Kondo S."/>
            <person name="Konno H."/>
            <person name="Nakano K."/>
            <person name="Ninomiya N."/>
            <person name="Nishio T."/>
            <person name="Okada M."/>
            <person name="Plessy C."/>
            <person name="Shibata K."/>
            <person name="Shiraki T."/>
            <person name="Suzuki S."/>
            <person name="Tagami M."/>
            <person name="Waki K."/>
            <person name="Watahiki A."/>
            <person name="Okamura-Oho Y."/>
            <person name="Suzuki H."/>
            <person name="Kawai J."/>
            <person name="Hayashizaki Y."/>
        </authorList>
    </citation>
    <scope>NUCLEOTIDE SEQUENCE [LARGE SCALE MRNA] (ISOFORMS 1 AND 2)</scope>
    <source>
        <strain>C57BL/6J</strain>
        <strain>NOD</strain>
        <tissue>Bone marrow</tissue>
        <tissue>Dendritic cell</tissue>
    </source>
</reference>
<reference key="6">
    <citation type="journal article" date="2004" name="Genome Res.">
        <title>The status, quality, and expansion of the NIH full-length cDNA project: the Mammalian Gene Collection (MGC).</title>
        <authorList>
            <consortium name="The MGC Project Team"/>
        </authorList>
    </citation>
    <scope>NUCLEOTIDE SEQUENCE [LARGE SCALE MRNA] (ISOFORM 2)</scope>
    <source>
        <strain>FVB/N</strain>
        <tissue>Mammary gland</tissue>
    </source>
</reference>
<reference key="7">
    <citation type="journal article" date="2005" name="Nat. Med.">
        <title>Lactadherin promotes VEGF-dependent neovascularization.</title>
        <authorList>
            <person name="Silvestre J.S."/>
            <person name="Thery C."/>
            <person name="Hamard G."/>
            <person name="Boddaert J."/>
            <person name="Aguilar B."/>
            <person name="Delcayre A."/>
            <person name="Houbron C."/>
            <person name="Tamarat R."/>
            <person name="Blanc-Brude O."/>
            <person name="Heeneman S."/>
            <person name="Clergue M."/>
            <person name="Duriez M."/>
            <person name="Merval R."/>
            <person name="Levy B."/>
            <person name="Tedgui A."/>
            <person name="Amigorena S."/>
            <person name="Mallat Z."/>
        </authorList>
    </citation>
    <scope>INTERACTION WITH ITGB3 AND ITGB5</scope>
    <scope>FUNCTION IN NEOVASCULARIZATION</scope>
</reference>
<reference key="8">
    <citation type="journal article" date="2007" name="J. Clin. Invest.">
        <title>Milk fat globule-EGF factor 8/lactadherin plays a crucial role in maintenance and repair of murine intestinal epithelium.</title>
        <authorList>
            <person name="Bu H.F."/>
            <person name="Zuo X.L."/>
            <person name="Wang X."/>
            <person name="Ensslin M.A."/>
            <person name="Koti V."/>
            <person name="Hsueh W."/>
            <person name="Raymond A.S."/>
            <person name="Shur B.D."/>
            <person name="Tan X.D."/>
        </authorList>
    </citation>
    <scope>FUNCTION IN GUT EPITHELIAL REPAIR</scope>
</reference>
<reference key="9">
    <citation type="journal article" date="2010" name="Cell">
        <title>A tissue-specific atlas of mouse protein phosphorylation and expression.</title>
        <authorList>
            <person name="Huttlin E.L."/>
            <person name="Jedrychowski M.P."/>
            <person name="Elias J.E."/>
            <person name="Goswami T."/>
            <person name="Rad R."/>
            <person name="Beausoleil S.A."/>
            <person name="Villen J."/>
            <person name="Haas W."/>
            <person name="Sowa M.E."/>
            <person name="Gygi S.P."/>
        </authorList>
    </citation>
    <scope>IDENTIFICATION BY MASS SPECTROMETRY [LARGE SCALE ANALYSIS]</scope>
    <source>
        <tissue>Heart</tissue>
        <tissue>Lung</tissue>
        <tissue>Spleen</tissue>
    </source>
</reference>
<reference key="10">
    <citation type="journal article" date="2013" name="Biochim. Biophys. Acta">
        <title>NMR solution structure of C2 domain of MFG-E8 and insights into its molecular recognition with phosphatidylserine.</title>
        <authorList>
            <person name="Ye H."/>
            <person name="Li B."/>
            <person name="Subramanian V."/>
            <person name="Choi B.H."/>
            <person name="Liang Y."/>
            <person name="Harikishore A."/>
            <person name="Chakraborty G."/>
            <person name="Baek K."/>
            <person name="Yoon H.S."/>
        </authorList>
    </citation>
    <scope>STRUCTURE BY NMR OF 306-463</scope>
    <scope>DISULFIDE BOND</scope>
</reference>